<evidence type="ECO:0000250" key="1">
    <source>
        <dbReference type="UniProtKB" id="Q9BZX2"/>
    </source>
</evidence>
<evidence type="ECO:0000250" key="2">
    <source>
        <dbReference type="UniProtKB" id="Q9HA47"/>
    </source>
</evidence>
<evidence type="ECO:0000256" key="3">
    <source>
        <dbReference type="SAM" id="MobiDB-lite"/>
    </source>
</evidence>
<evidence type="ECO:0000305" key="4"/>
<gene>
    <name type="primary">uck1-a</name>
</gene>
<feature type="chain" id="PRO_0000346102" description="Uridine-cytidine kinase 1-A">
    <location>
        <begin position="1"/>
        <end position="271"/>
    </location>
</feature>
<feature type="region of interest" description="Disordered" evidence="3">
    <location>
        <begin position="241"/>
        <end position="271"/>
    </location>
</feature>
<feature type="compositionally biased region" description="Basic and acidic residues" evidence="3">
    <location>
        <begin position="262"/>
        <end position="271"/>
    </location>
</feature>
<feature type="binding site" evidence="2">
    <location>
        <begin position="24"/>
        <end position="32"/>
    </location>
    <ligand>
        <name>ATP</name>
        <dbReference type="ChEBI" id="CHEBI:30616"/>
    </ligand>
</feature>
<feature type="binding site" evidence="1">
    <location>
        <position position="81"/>
    </location>
    <ligand>
        <name>substrate</name>
    </ligand>
</feature>
<feature type="binding site" evidence="1">
    <location>
        <position position="109"/>
    </location>
    <ligand>
        <name>substrate</name>
    </ligand>
</feature>
<feature type="binding site" evidence="1">
    <location>
        <position position="114"/>
    </location>
    <ligand>
        <name>substrate</name>
    </ligand>
</feature>
<feature type="binding site" evidence="1">
    <location>
        <position position="163"/>
    </location>
    <ligand>
        <name>substrate</name>
    </ligand>
</feature>
<feature type="binding site" evidence="1">
    <location>
        <position position="172"/>
    </location>
    <ligand>
        <name>substrate</name>
    </ligand>
</feature>
<feature type="binding site" evidence="1">
    <location>
        <position position="180"/>
    </location>
    <ligand>
        <name>substrate</name>
    </ligand>
</feature>
<feature type="binding site" evidence="2">
    <location>
        <position position="209"/>
    </location>
    <ligand>
        <name>ATP</name>
        <dbReference type="ChEBI" id="CHEBI:30616"/>
    </ligand>
</feature>
<proteinExistence type="evidence at transcript level"/>
<keyword id="KW-0067">ATP-binding</keyword>
<keyword id="KW-0418">Kinase</keyword>
<keyword id="KW-0547">Nucleotide-binding</keyword>
<keyword id="KW-1185">Reference proteome</keyword>
<keyword id="KW-0808">Transferase</keyword>
<comment type="function">
    <text evidence="2">Phosphorylates uridine and cytidine to uridine monophosphate and cytidine monophosphate. Does not phosphorylate deoxyribonucleosides or purine ribonucleosides. Can use ATP or GTP as a phosphate donor.</text>
</comment>
<comment type="catalytic activity">
    <reaction evidence="2">
        <text>uridine + ATP = UMP + ADP + H(+)</text>
        <dbReference type="Rhea" id="RHEA:16825"/>
        <dbReference type="ChEBI" id="CHEBI:15378"/>
        <dbReference type="ChEBI" id="CHEBI:16704"/>
        <dbReference type="ChEBI" id="CHEBI:30616"/>
        <dbReference type="ChEBI" id="CHEBI:57865"/>
        <dbReference type="ChEBI" id="CHEBI:456216"/>
        <dbReference type="EC" id="2.7.1.48"/>
    </reaction>
</comment>
<comment type="catalytic activity">
    <reaction evidence="2">
        <text>cytidine + ATP = CMP + ADP + H(+)</text>
        <dbReference type="Rhea" id="RHEA:24674"/>
        <dbReference type="ChEBI" id="CHEBI:15378"/>
        <dbReference type="ChEBI" id="CHEBI:17562"/>
        <dbReference type="ChEBI" id="CHEBI:30616"/>
        <dbReference type="ChEBI" id="CHEBI:60377"/>
        <dbReference type="ChEBI" id="CHEBI:456216"/>
        <dbReference type="EC" id="2.7.1.48"/>
    </reaction>
</comment>
<comment type="pathway">
    <text evidence="2">Pyrimidine metabolism; CTP biosynthesis via salvage pathway; CTP from cytidine: step 1/3.</text>
</comment>
<comment type="pathway">
    <text evidence="2">Pyrimidine metabolism; UMP biosynthesis via salvage pathway; UMP from uridine: step 1/1.</text>
</comment>
<comment type="similarity">
    <text evidence="4">Belongs to the uridine kinase family.</text>
</comment>
<protein>
    <recommendedName>
        <fullName>Uridine-cytidine kinase 1-A</fullName>
        <shortName>UCK 1-A</shortName>
        <ecNumber evidence="2">2.7.1.48</ecNumber>
    </recommendedName>
    <alternativeName>
        <fullName>Cytidine monophosphokinase 1-A</fullName>
    </alternativeName>
    <alternativeName>
        <fullName>Uridine monophosphokinase 1-A</fullName>
    </alternativeName>
</protein>
<sequence>MASAGSLDVPERGHQRPFLIGVSGGTASGKSTVCEKIMELLGQNEVDHRQRKVVILSQDRFYKVLTPEQKTRALKGQYNFDHPDAFDNELMHRTLTQILEGQIVDVPMYDFITHSRLPETTTVYPADVLLFEGILAFYNQEIRDMFQLKLFVDTDSDVRLSRRVLRDMKRGRDLEQILTQYTTFVKPAFEEFSLPTKKYADVIIPRGVDNMVAINLIVQHIQDILNGDICKWQRGVLNGRSQKRTFPGQGESGGLILPGKRTHLESSSRPH</sequence>
<organism>
    <name type="scientific">Xenopus laevis</name>
    <name type="common">African clawed frog</name>
    <dbReference type="NCBI Taxonomy" id="8355"/>
    <lineage>
        <taxon>Eukaryota</taxon>
        <taxon>Metazoa</taxon>
        <taxon>Chordata</taxon>
        <taxon>Craniata</taxon>
        <taxon>Vertebrata</taxon>
        <taxon>Euteleostomi</taxon>
        <taxon>Amphibia</taxon>
        <taxon>Batrachia</taxon>
        <taxon>Anura</taxon>
        <taxon>Pipoidea</taxon>
        <taxon>Pipidae</taxon>
        <taxon>Xenopodinae</taxon>
        <taxon>Xenopus</taxon>
        <taxon>Xenopus</taxon>
    </lineage>
</organism>
<reference key="1">
    <citation type="submission" date="2003-10" db="EMBL/GenBank/DDBJ databases">
        <authorList>
            <consortium name="NIH - Xenopus Gene Collection (XGC) project"/>
        </authorList>
    </citation>
    <scope>NUCLEOTIDE SEQUENCE [LARGE SCALE MRNA]</scope>
    <source>
        <tissue>Lung</tissue>
    </source>
</reference>
<accession>Q6PA79</accession>
<dbReference type="EC" id="2.7.1.48" evidence="2"/>
<dbReference type="EMBL" id="BC060421">
    <property type="protein sequence ID" value="AAH60421.1"/>
    <property type="molecule type" value="mRNA"/>
</dbReference>
<dbReference type="RefSeq" id="NP_001083512.1">
    <property type="nucleotide sequence ID" value="NM_001090043.1"/>
</dbReference>
<dbReference type="SMR" id="Q6PA79"/>
<dbReference type="DNASU" id="398966"/>
<dbReference type="GeneID" id="398966"/>
<dbReference type="KEGG" id="xla:398966"/>
<dbReference type="AGR" id="Xenbase:XB-GENE-961188"/>
<dbReference type="CTD" id="398966"/>
<dbReference type="Xenbase" id="XB-GENE-961188">
    <property type="gene designation" value="uck1.S"/>
</dbReference>
<dbReference type="OMA" id="PQSTVCE"/>
<dbReference type="OrthoDB" id="10257085at2759"/>
<dbReference type="UniPathway" id="UPA00574">
    <property type="reaction ID" value="UER00637"/>
</dbReference>
<dbReference type="UniPathway" id="UPA00579">
    <property type="reaction ID" value="UER00640"/>
</dbReference>
<dbReference type="Proteomes" id="UP000186698">
    <property type="component" value="Chromosome 8S"/>
</dbReference>
<dbReference type="Bgee" id="398966">
    <property type="expression patterns" value="Expressed in pancreas and 20 other cell types or tissues"/>
</dbReference>
<dbReference type="GO" id="GO:0005737">
    <property type="term" value="C:cytoplasm"/>
    <property type="evidence" value="ECO:0000318"/>
    <property type="project" value="GO_Central"/>
</dbReference>
<dbReference type="GO" id="GO:0005524">
    <property type="term" value="F:ATP binding"/>
    <property type="evidence" value="ECO:0007669"/>
    <property type="project" value="UniProtKB-KW"/>
</dbReference>
<dbReference type="GO" id="GO:0043771">
    <property type="term" value="F:cytidine kinase activity"/>
    <property type="evidence" value="ECO:0000250"/>
    <property type="project" value="UniProtKB"/>
</dbReference>
<dbReference type="GO" id="GO:0004849">
    <property type="term" value="F:uridine kinase activity"/>
    <property type="evidence" value="ECO:0000250"/>
    <property type="project" value="UniProtKB"/>
</dbReference>
<dbReference type="GO" id="GO:0044211">
    <property type="term" value="P:CTP salvage"/>
    <property type="evidence" value="ECO:0000250"/>
    <property type="project" value="UniProtKB"/>
</dbReference>
<dbReference type="GO" id="GO:0044206">
    <property type="term" value="P:UMP salvage"/>
    <property type="evidence" value="ECO:0000250"/>
    <property type="project" value="UniProtKB"/>
</dbReference>
<dbReference type="CDD" id="cd02023">
    <property type="entry name" value="UMPK"/>
    <property type="match status" value="1"/>
</dbReference>
<dbReference type="FunFam" id="3.40.50.300:FF:000297">
    <property type="entry name" value="Uridine-cytidine kinase 2"/>
    <property type="match status" value="1"/>
</dbReference>
<dbReference type="Gene3D" id="3.40.50.300">
    <property type="entry name" value="P-loop containing nucleotide triphosphate hydrolases"/>
    <property type="match status" value="1"/>
</dbReference>
<dbReference type="InterPro" id="IPR027417">
    <property type="entry name" value="P-loop_NTPase"/>
</dbReference>
<dbReference type="InterPro" id="IPR006083">
    <property type="entry name" value="PRK/URK"/>
</dbReference>
<dbReference type="InterPro" id="IPR000764">
    <property type="entry name" value="Uridine_kinase-like"/>
</dbReference>
<dbReference type="NCBIfam" id="NF004018">
    <property type="entry name" value="PRK05480.1"/>
    <property type="match status" value="1"/>
</dbReference>
<dbReference type="NCBIfam" id="TIGR00235">
    <property type="entry name" value="udk"/>
    <property type="match status" value="1"/>
</dbReference>
<dbReference type="PANTHER" id="PTHR10285">
    <property type="entry name" value="URIDINE KINASE"/>
    <property type="match status" value="1"/>
</dbReference>
<dbReference type="Pfam" id="PF00485">
    <property type="entry name" value="PRK"/>
    <property type="match status" value="1"/>
</dbReference>
<dbReference type="PRINTS" id="PR00988">
    <property type="entry name" value="URIDINKINASE"/>
</dbReference>
<dbReference type="SUPFAM" id="SSF52540">
    <property type="entry name" value="P-loop containing nucleoside triphosphate hydrolases"/>
    <property type="match status" value="1"/>
</dbReference>
<name>UCK1A_XENLA</name>